<comment type="function">
    <text evidence="1">Protease subunit of a proteasome-like degradation complex believed to be a general protein degrading machinery.</text>
</comment>
<comment type="catalytic activity">
    <reaction evidence="1">
        <text>ATP-dependent cleavage of peptide bonds with broad specificity.</text>
        <dbReference type="EC" id="3.4.25.2"/>
    </reaction>
</comment>
<comment type="activity regulation">
    <text evidence="1">Allosterically activated by HslU binding.</text>
</comment>
<comment type="subunit">
    <text evidence="1">A double ring-shaped homohexamer of HslV is capped on each side by a ring-shaped HslU homohexamer. The assembly of the HslU/HslV complex is dependent on binding of ATP.</text>
</comment>
<comment type="subcellular location">
    <subcellularLocation>
        <location evidence="1">Cytoplasm</location>
    </subcellularLocation>
</comment>
<comment type="similarity">
    <text evidence="1">Belongs to the peptidase T1B family. HslV subfamily.</text>
</comment>
<sequence length="184" mass="19809">MIEHNPTTIYGTTIVTVRKDGKVVIAGDGQVSLGNTVMKGNARKVRRIGKGNVIAGFAGATADAFTLLERLEAKLEQYPDQLMRASVELAKDWRTDRYLRKLEAMMLVADSKVTLALTGTGDVLEPEQGVMAIGSGGNYALAAARALIETDKSAEEIARKAMNIAADICIYTNHNIIVESLDAQ</sequence>
<proteinExistence type="inferred from homology"/>
<organism>
    <name type="scientific">Brucella suis biovar 1 (strain 1330)</name>
    <dbReference type="NCBI Taxonomy" id="204722"/>
    <lineage>
        <taxon>Bacteria</taxon>
        <taxon>Pseudomonadati</taxon>
        <taxon>Pseudomonadota</taxon>
        <taxon>Alphaproteobacteria</taxon>
        <taxon>Hyphomicrobiales</taxon>
        <taxon>Brucellaceae</taxon>
        <taxon>Brucella/Ochrobactrum group</taxon>
        <taxon>Brucella</taxon>
    </lineage>
</organism>
<dbReference type="EC" id="3.4.25.2" evidence="1"/>
<dbReference type="EMBL" id="AE014291">
    <property type="protein sequence ID" value="AAN30970.1"/>
    <property type="molecule type" value="Genomic_DNA"/>
</dbReference>
<dbReference type="EMBL" id="CP002997">
    <property type="protein sequence ID" value="AEM19387.1"/>
    <property type="molecule type" value="Genomic_DNA"/>
</dbReference>
<dbReference type="RefSeq" id="WP_002965144.1">
    <property type="nucleotide sequence ID" value="NZ_KN046804.1"/>
</dbReference>
<dbReference type="SMR" id="Q8FY11"/>
<dbReference type="MEROPS" id="T01.006"/>
<dbReference type="GeneID" id="55591650"/>
<dbReference type="KEGG" id="bms:BR2080"/>
<dbReference type="KEGG" id="bsi:BS1330_I2074"/>
<dbReference type="PATRIC" id="fig|204722.21.peg.1288"/>
<dbReference type="HOGENOM" id="CLU_093872_1_0_5"/>
<dbReference type="PhylomeDB" id="Q8FY11"/>
<dbReference type="Proteomes" id="UP000007104">
    <property type="component" value="Chromosome I"/>
</dbReference>
<dbReference type="GO" id="GO:0009376">
    <property type="term" value="C:HslUV protease complex"/>
    <property type="evidence" value="ECO:0007669"/>
    <property type="project" value="UniProtKB-UniRule"/>
</dbReference>
<dbReference type="GO" id="GO:0005839">
    <property type="term" value="C:proteasome core complex"/>
    <property type="evidence" value="ECO:0007669"/>
    <property type="project" value="InterPro"/>
</dbReference>
<dbReference type="GO" id="GO:0046872">
    <property type="term" value="F:metal ion binding"/>
    <property type="evidence" value="ECO:0007669"/>
    <property type="project" value="UniProtKB-KW"/>
</dbReference>
<dbReference type="GO" id="GO:0004298">
    <property type="term" value="F:threonine-type endopeptidase activity"/>
    <property type="evidence" value="ECO:0007669"/>
    <property type="project" value="UniProtKB-KW"/>
</dbReference>
<dbReference type="GO" id="GO:0051603">
    <property type="term" value="P:proteolysis involved in protein catabolic process"/>
    <property type="evidence" value="ECO:0007669"/>
    <property type="project" value="InterPro"/>
</dbReference>
<dbReference type="CDD" id="cd01913">
    <property type="entry name" value="protease_HslV"/>
    <property type="match status" value="1"/>
</dbReference>
<dbReference type="FunFam" id="3.60.20.10:FF:000002">
    <property type="entry name" value="ATP-dependent protease subunit HslV"/>
    <property type="match status" value="1"/>
</dbReference>
<dbReference type="Gene3D" id="3.60.20.10">
    <property type="entry name" value="Glutamine Phosphoribosylpyrophosphate, subunit 1, domain 1"/>
    <property type="match status" value="1"/>
</dbReference>
<dbReference type="HAMAP" id="MF_00248">
    <property type="entry name" value="HslV"/>
    <property type="match status" value="1"/>
</dbReference>
<dbReference type="InterPro" id="IPR022281">
    <property type="entry name" value="ATP-dep_Prtase_HsIV_su"/>
</dbReference>
<dbReference type="InterPro" id="IPR029055">
    <property type="entry name" value="Ntn_hydrolases_N"/>
</dbReference>
<dbReference type="InterPro" id="IPR001353">
    <property type="entry name" value="Proteasome_sua/b"/>
</dbReference>
<dbReference type="InterPro" id="IPR023333">
    <property type="entry name" value="Proteasome_suB-type"/>
</dbReference>
<dbReference type="NCBIfam" id="TIGR03692">
    <property type="entry name" value="ATP_dep_HslV"/>
    <property type="match status" value="1"/>
</dbReference>
<dbReference type="NCBIfam" id="NF003964">
    <property type="entry name" value="PRK05456.1"/>
    <property type="match status" value="1"/>
</dbReference>
<dbReference type="PANTHER" id="PTHR32194:SF7">
    <property type="entry name" value="ATP-DEPENDENT PROTEASE SUBUNIT HSLV"/>
    <property type="match status" value="1"/>
</dbReference>
<dbReference type="PANTHER" id="PTHR32194">
    <property type="entry name" value="METALLOPROTEASE TLDD"/>
    <property type="match status" value="1"/>
</dbReference>
<dbReference type="Pfam" id="PF00227">
    <property type="entry name" value="Proteasome"/>
    <property type="match status" value="1"/>
</dbReference>
<dbReference type="PIRSF" id="PIRSF039093">
    <property type="entry name" value="HslV"/>
    <property type="match status" value="1"/>
</dbReference>
<dbReference type="SUPFAM" id="SSF56235">
    <property type="entry name" value="N-terminal nucleophile aminohydrolases (Ntn hydrolases)"/>
    <property type="match status" value="1"/>
</dbReference>
<dbReference type="PROSITE" id="PS51476">
    <property type="entry name" value="PROTEASOME_BETA_2"/>
    <property type="match status" value="1"/>
</dbReference>
<accession>Q8FY11</accession>
<accession>G0K928</accession>
<gene>
    <name evidence="1" type="primary">hslV</name>
    <name type="ordered locus">BR2080</name>
    <name type="ordered locus">BS1330_I2074</name>
</gene>
<protein>
    <recommendedName>
        <fullName evidence="1">ATP-dependent protease subunit HslV</fullName>
        <ecNumber evidence="1">3.4.25.2</ecNumber>
    </recommendedName>
</protein>
<reference key="1">
    <citation type="journal article" date="2002" name="Proc. Natl. Acad. Sci. U.S.A.">
        <title>The Brucella suis genome reveals fundamental similarities between animal and plant pathogens and symbionts.</title>
        <authorList>
            <person name="Paulsen I.T."/>
            <person name="Seshadri R."/>
            <person name="Nelson K.E."/>
            <person name="Eisen J.A."/>
            <person name="Heidelberg J.F."/>
            <person name="Read T.D."/>
            <person name="Dodson R.J."/>
            <person name="Umayam L.A."/>
            <person name="Brinkac L.M."/>
            <person name="Beanan M.J."/>
            <person name="Daugherty S.C."/>
            <person name="DeBoy R.T."/>
            <person name="Durkin A.S."/>
            <person name="Kolonay J.F."/>
            <person name="Madupu R."/>
            <person name="Nelson W.C."/>
            <person name="Ayodeji B."/>
            <person name="Kraul M."/>
            <person name="Shetty J."/>
            <person name="Malek J.A."/>
            <person name="Van Aken S.E."/>
            <person name="Riedmuller S."/>
            <person name="Tettelin H."/>
            <person name="Gill S.R."/>
            <person name="White O."/>
            <person name="Salzberg S.L."/>
            <person name="Hoover D.L."/>
            <person name="Lindler L.E."/>
            <person name="Halling S.M."/>
            <person name="Boyle S.M."/>
            <person name="Fraser C.M."/>
        </authorList>
    </citation>
    <scope>NUCLEOTIDE SEQUENCE [LARGE SCALE GENOMIC DNA]</scope>
    <source>
        <strain>1330</strain>
    </source>
</reference>
<reference key="2">
    <citation type="journal article" date="2011" name="J. Bacteriol.">
        <title>Revised genome sequence of Brucella suis 1330.</title>
        <authorList>
            <person name="Tae H."/>
            <person name="Shallom S."/>
            <person name="Settlage R."/>
            <person name="Preston D."/>
            <person name="Adams L.G."/>
            <person name="Garner H.R."/>
        </authorList>
    </citation>
    <scope>NUCLEOTIDE SEQUENCE [LARGE SCALE GENOMIC DNA]</scope>
    <source>
        <strain>1330</strain>
    </source>
</reference>
<name>HSLV_BRUSU</name>
<feature type="chain" id="PRO_0000148093" description="ATP-dependent protease subunit HslV">
    <location>
        <begin position="1"/>
        <end position="184"/>
    </location>
</feature>
<feature type="active site" evidence="1">
    <location>
        <position position="12"/>
    </location>
</feature>
<feature type="binding site" evidence="1">
    <location>
        <position position="166"/>
    </location>
    <ligand>
        <name>Na(+)</name>
        <dbReference type="ChEBI" id="CHEBI:29101"/>
    </ligand>
</feature>
<feature type="binding site" evidence="1">
    <location>
        <position position="169"/>
    </location>
    <ligand>
        <name>Na(+)</name>
        <dbReference type="ChEBI" id="CHEBI:29101"/>
    </ligand>
</feature>
<feature type="binding site" evidence="1">
    <location>
        <position position="172"/>
    </location>
    <ligand>
        <name>Na(+)</name>
        <dbReference type="ChEBI" id="CHEBI:29101"/>
    </ligand>
</feature>
<keyword id="KW-0021">Allosteric enzyme</keyword>
<keyword id="KW-0963">Cytoplasm</keyword>
<keyword id="KW-0378">Hydrolase</keyword>
<keyword id="KW-0479">Metal-binding</keyword>
<keyword id="KW-0645">Protease</keyword>
<keyword id="KW-0915">Sodium</keyword>
<keyword id="KW-0888">Threonine protease</keyword>
<evidence type="ECO:0000255" key="1">
    <source>
        <dbReference type="HAMAP-Rule" id="MF_00248"/>
    </source>
</evidence>